<sequence length="111" mass="12105">MIGIVLVLASLLSVGGQLCQKQATRPLTTGGRRRHLMLWLGLALICMGAAMVLWLLVLQTLPVGIAYPMLSLNFVWVTLAAWKIWHEQVLPRHWLGVALIISGIIILGSAA</sequence>
<name>ARNE_SALPA</name>
<proteinExistence type="inferred from homology"/>
<dbReference type="EMBL" id="CP000026">
    <property type="protein sequence ID" value="AAV76563.1"/>
    <property type="molecule type" value="Genomic_DNA"/>
</dbReference>
<dbReference type="RefSeq" id="WP_000579483.1">
    <property type="nucleotide sequence ID" value="NC_006511.1"/>
</dbReference>
<dbReference type="SMR" id="Q5PNA9"/>
<dbReference type="DNASU" id="3177434"/>
<dbReference type="KEGG" id="spt:SPA0561"/>
<dbReference type="HOGENOM" id="CLU_131462_5_1_6"/>
<dbReference type="UniPathway" id="UPA00030"/>
<dbReference type="Proteomes" id="UP000008185">
    <property type="component" value="Chromosome"/>
</dbReference>
<dbReference type="GO" id="GO:0005886">
    <property type="term" value="C:plasma membrane"/>
    <property type="evidence" value="ECO:0007669"/>
    <property type="project" value="UniProtKB-SubCell"/>
</dbReference>
<dbReference type="GO" id="GO:1901505">
    <property type="term" value="F:carbohydrate derivative transmembrane transporter activity"/>
    <property type="evidence" value="ECO:0007669"/>
    <property type="project" value="InterPro"/>
</dbReference>
<dbReference type="GO" id="GO:0009245">
    <property type="term" value="P:lipid A biosynthetic process"/>
    <property type="evidence" value="ECO:0007669"/>
    <property type="project" value="UniProtKB-UniRule"/>
</dbReference>
<dbReference type="GO" id="GO:0009103">
    <property type="term" value="P:lipopolysaccharide biosynthetic process"/>
    <property type="evidence" value="ECO:0007669"/>
    <property type="project" value="UniProtKB-UniRule"/>
</dbReference>
<dbReference type="FunFam" id="1.10.3730.20:FF:000002">
    <property type="entry name" value="Probable 4-amino-4-deoxy-L-arabinose-phosphoundecaprenol flippase subunit ArnE"/>
    <property type="match status" value="1"/>
</dbReference>
<dbReference type="Gene3D" id="1.10.3730.20">
    <property type="match status" value="1"/>
</dbReference>
<dbReference type="HAMAP" id="MF_01869">
    <property type="entry name" value="Flippase_ArnE"/>
    <property type="match status" value="1"/>
</dbReference>
<dbReference type="InterPro" id="IPR000620">
    <property type="entry name" value="EamA_dom"/>
</dbReference>
<dbReference type="InterPro" id="IPR022883">
    <property type="entry name" value="Flippase_ArnE"/>
</dbReference>
<dbReference type="InterPro" id="IPR000390">
    <property type="entry name" value="Small_drug/metabolite_transptr"/>
</dbReference>
<dbReference type="NCBIfam" id="NF011625">
    <property type="entry name" value="PRK15051.1"/>
    <property type="match status" value="1"/>
</dbReference>
<dbReference type="PANTHER" id="PTHR30561:SF23">
    <property type="entry name" value="4-AMINO-4-DEOXY-L-ARABINOSE-PHOSPHOUNDECAPRENOL FLIPPASE SUBUNIT ARNE-RELATED"/>
    <property type="match status" value="1"/>
</dbReference>
<dbReference type="PANTHER" id="PTHR30561">
    <property type="entry name" value="SMR FAMILY PROTON-DEPENDENT DRUG EFFLUX TRANSPORTER SUGE"/>
    <property type="match status" value="1"/>
</dbReference>
<dbReference type="Pfam" id="PF00892">
    <property type="entry name" value="EamA"/>
    <property type="match status" value="1"/>
</dbReference>
<dbReference type="SUPFAM" id="SSF103481">
    <property type="entry name" value="Multidrug resistance efflux transporter EmrE"/>
    <property type="match status" value="1"/>
</dbReference>
<reference key="1">
    <citation type="journal article" date="2004" name="Nat. Genet.">
        <title>Comparison of genome degradation in Paratyphi A and Typhi, human-restricted serovars of Salmonella enterica that cause typhoid.</title>
        <authorList>
            <person name="McClelland M."/>
            <person name="Sanderson K.E."/>
            <person name="Clifton S.W."/>
            <person name="Latreille P."/>
            <person name="Porwollik S."/>
            <person name="Sabo A."/>
            <person name="Meyer R."/>
            <person name="Bieri T."/>
            <person name="Ozersky P."/>
            <person name="McLellan M."/>
            <person name="Harkins C.R."/>
            <person name="Wang C."/>
            <person name="Nguyen C."/>
            <person name="Berghoff A."/>
            <person name="Elliott G."/>
            <person name="Kohlberg S."/>
            <person name="Strong C."/>
            <person name="Du F."/>
            <person name="Carter J."/>
            <person name="Kremizki C."/>
            <person name="Layman D."/>
            <person name="Leonard S."/>
            <person name="Sun H."/>
            <person name="Fulton L."/>
            <person name="Nash W."/>
            <person name="Miner T."/>
            <person name="Minx P."/>
            <person name="Delehaunty K."/>
            <person name="Fronick C."/>
            <person name="Magrini V."/>
            <person name="Nhan M."/>
            <person name="Warren W."/>
            <person name="Florea L."/>
            <person name="Spieth J."/>
            <person name="Wilson R.K."/>
        </authorList>
    </citation>
    <scope>NUCLEOTIDE SEQUENCE [LARGE SCALE GENOMIC DNA]</scope>
    <source>
        <strain>ATCC 9150 / SARB42</strain>
    </source>
</reference>
<organism>
    <name type="scientific">Salmonella paratyphi A (strain ATCC 9150 / SARB42)</name>
    <dbReference type="NCBI Taxonomy" id="295319"/>
    <lineage>
        <taxon>Bacteria</taxon>
        <taxon>Pseudomonadati</taxon>
        <taxon>Pseudomonadota</taxon>
        <taxon>Gammaproteobacteria</taxon>
        <taxon>Enterobacterales</taxon>
        <taxon>Enterobacteriaceae</taxon>
        <taxon>Salmonella</taxon>
    </lineage>
</organism>
<evidence type="ECO:0000255" key="1">
    <source>
        <dbReference type="HAMAP-Rule" id="MF_01869"/>
    </source>
</evidence>
<protein>
    <recommendedName>
        <fullName evidence="1">Probable 4-amino-4-deoxy-L-arabinose-phosphoundecaprenol flippase subunit ArnE</fullName>
        <shortName evidence="1">L-Ara4N-phosphoundecaprenol flippase subunit ArnE</shortName>
    </recommendedName>
    <alternativeName>
        <fullName evidence="1">Undecaprenyl phosphate-aminoarabinose flippase subunit ArnE</fullName>
    </alternativeName>
</protein>
<keyword id="KW-0997">Cell inner membrane</keyword>
<keyword id="KW-1003">Cell membrane</keyword>
<keyword id="KW-0441">Lipid A biosynthesis</keyword>
<keyword id="KW-0444">Lipid biosynthesis</keyword>
<keyword id="KW-0443">Lipid metabolism</keyword>
<keyword id="KW-0448">Lipopolysaccharide biosynthesis</keyword>
<keyword id="KW-0472">Membrane</keyword>
<keyword id="KW-0812">Transmembrane</keyword>
<keyword id="KW-1133">Transmembrane helix</keyword>
<keyword id="KW-0813">Transport</keyword>
<gene>
    <name evidence="1" type="primary">arnE</name>
    <name type="ordered locus">SPA0561</name>
</gene>
<feature type="chain" id="PRO_0000382997" description="Probable 4-amino-4-deoxy-L-arabinose-phosphoundecaprenol flippase subunit ArnE">
    <location>
        <begin position="1"/>
        <end position="111"/>
    </location>
</feature>
<feature type="transmembrane region" description="Helical" evidence="1">
    <location>
        <begin position="38"/>
        <end position="58"/>
    </location>
</feature>
<feature type="transmembrane region" description="Helical" evidence="1">
    <location>
        <begin position="61"/>
        <end position="81"/>
    </location>
</feature>
<feature type="transmembrane region" description="Helical" evidence="1">
    <location>
        <begin position="89"/>
        <end position="109"/>
    </location>
</feature>
<feature type="domain" description="EamA" evidence="1">
    <location>
        <begin position="40"/>
        <end position="109"/>
    </location>
</feature>
<accession>Q5PNA9</accession>
<comment type="function">
    <text evidence="1">Translocates 4-amino-4-deoxy-L-arabinose-phosphoundecaprenol (alpha-L-Ara4N-phosphoundecaprenol) from the cytoplasmic to the periplasmic side of the inner membrane.</text>
</comment>
<comment type="pathway">
    <text evidence="1">Bacterial outer membrane biogenesis; lipopolysaccharide biosynthesis.</text>
</comment>
<comment type="subunit">
    <text evidence="1">Heterodimer of ArnE and ArnF.</text>
</comment>
<comment type="subcellular location">
    <subcellularLocation>
        <location evidence="1">Cell inner membrane</location>
        <topology evidence="1">Multi-pass membrane protein</topology>
    </subcellularLocation>
</comment>
<comment type="similarity">
    <text evidence="1">Belongs to the ArnE family.</text>
</comment>